<evidence type="ECO:0000255" key="1">
    <source>
        <dbReference type="HAMAP-Rule" id="MF_00564"/>
    </source>
</evidence>
<keyword id="KW-0548">Nucleotidyltransferase</keyword>
<keyword id="KW-1185">Reference proteome</keyword>
<keyword id="KW-0694">RNA-binding</keyword>
<keyword id="KW-0698">rRNA processing</keyword>
<keyword id="KW-0808">Transferase</keyword>
<keyword id="KW-0819">tRNA processing</keyword>
<keyword id="KW-0820">tRNA-binding</keyword>
<organism>
    <name type="scientific">Parvibaculum lavamentivorans (strain DS-1 / DSM 13023 / NCIMB 13966)</name>
    <dbReference type="NCBI Taxonomy" id="402881"/>
    <lineage>
        <taxon>Bacteria</taxon>
        <taxon>Pseudomonadati</taxon>
        <taxon>Pseudomonadota</taxon>
        <taxon>Alphaproteobacteria</taxon>
        <taxon>Hyphomicrobiales</taxon>
        <taxon>Parvibaculaceae</taxon>
        <taxon>Parvibaculum</taxon>
    </lineage>
</organism>
<comment type="function">
    <text evidence="1">Phosphorolytic 3'-5' exoribonuclease that plays an important role in tRNA 3'-end maturation. Removes nucleotide residues following the 3'-CCA terminus of tRNAs; can also add nucleotides to the ends of RNA molecules by using nucleoside diphosphates as substrates, but this may not be physiologically important. Probably plays a role in initiation of 16S rRNA degradation (leading to ribosome degradation) during starvation.</text>
</comment>
<comment type="catalytic activity">
    <reaction evidence="1">
        <text>tRNA(n+1) + phosphate = tRNA(n) + a ribonucleoside 5'-diphosphate</text>
        <dbReference type="Rhea" id="RHEA:10628"/>
        <dbReference type="Rhea" id="RHEA-COMP:17343"/>
        <dbReference type="Rhea" id="RHEA-COMP:17344"/>
        <dbReference type="ChEBI" id="CHEBI:43474"/>
        <dbReference type="ChEBI" id="CHEBI:57930"/>
        <dbReference type="ChEBI" id="CHEBI:173114"/>
        <dbReference type="EC" id="2.7.7.56"/>
    </reaction>
</comment>
<comment type="subunit">
    <text evidence="1">Homohexameric ring arranged as a trimer of dimers.</text>
</comment>
<comment type="similarity">
    <text evidence="1">Belongs to the RNase PH family.</text>
</comment>
<accession>A7HZ45</accession>
<sequence>MRPSGRQPQEMRTVSFEPGVAKHAEGSCLVRFGDTHVLCTASLEERVPPFLKGGGQGWVTAEYGMLPRSTHERMRREAAQGKQSGRTQEIQRLVGRSLRSVVDLKALGERQISVDCDVLQADGGTRTASITGAWVALHQCIEWMRARSMISAPVLKDHVAAISCGIYQGVPVVDLDYAEDSTADTDANFVITGKGGICEIQGTAEGEPFSDEEFLSLLALAKTSIADLVRRQKEAVSA</sequence>
<feature type="chain" id="PRO_1000072566" description="Ribonuclease PH">
    <location>
        <begin position="1"/>
        <end position="238"/>
    </location>
</feature>
<feature type="binding site" evidence="1">
    <location>
        <position position="86"/>
    </location>
    <ligand>
        <name>phosphate</name>
        <dbReference type="ChEBI" id="CHEBI:43474"/>
        <note>substrate</note>
    </ligand>
</feature>
<feature type="binding site" evidence="1">
    <location>
        <begin position="124"/>
        <end position="126"/>
    </location>
    <ligand>
        <name>phosphate</name>
        <dbReference type="ChEBI" id="CHEBI:43474"/>
        <note>substrate</note>
    </ligand>
</feature>
<proteinExistence type="inferred from homology"/>
<gene>
    <name evidence="1" type="primary">rph</name>
    <name type="ordered locus">Plav_3580</name>
</gene>
<reference key="1">
    <citation type="journal article" date="2011" name="Stand. Genomic Sci.">
        <title>Complete genome sequence of Parvibaculum lavamentivorans type strain (DS-1(T)).</title>
        <authorList>
            <person name="Schleheck D."/>
            <person name="Weiss M."/>
            <person name="Pitluck S."/>
            <person name="Bruce D."/>
            <person name="Land M.L."/>
            <person name="Han S."/>
            <person name="Saunders E."/>
            <person name="Tapia R."/>
            <person name="Detter C."/>
            <person name="Brettin T."/>
            <person name="Han J."/>
            <person name="Woyke T."/>
            <person name="Goodwin L."/>
            <person name="Pennacchio L."/>
            <person name="Nolan M."/>
            <person name="Cook A.M."/>
            <person name="Kjelleberg S."/>
            <person name="Thomas T."/>
        </authorList>
    </citation>
    <scope>NUCLEOTIDE SEQUENCE [LARGE SCALE GENOMIC DNA]</scope>
    <source>
        <strain>DS-1 / DSM 13023 / NCIMB 13966</strain>
    </source>
</reference>
<name>RNPH_PARL1</name>
<protein>
    <recommendedName>
        <fullName evidence="1">Ribonuclease PH</fullName>
        <shortName evidence="1">RNase PH</shortName>
        <ecNumber evidence="1">2.7.7.56</ecNumber>
    </recommendedName>
    <alternativeName>
        <fullName evidence="1">tRNA nucleotidyltransferase</fullName>
    </alternativeName>
</protein>
<dbReference type="EC" id="2.7.7.56" evidence="1"/>
<dbReference type="EMBL" id="CP000774">
    <property type="protein sequence ID" value="ABS65178.1"/>
    <property type="molecule type" value="Genomic_DNA"/>
</dbReference>
<dbReference type="RefSeq" id="WP_012112438.1">
    <property type="nucleotide sequence ID" value="NC_009719.1"/>
</dbReference>
<dbReference type="SMR" id="A7HZ45"/>
<dbReference type="STRING" id="402881.Plav_3580"/>
<dbReference type="KEGG" id="pla:Plav_3580"/>
<dbReference type="eggNOG" id="COG0689">
    <property type="taxonomic scope" value="Bacteria"/>
</dbReference>
<dbReference type="HOGENOM" id="CLU_050858_0_0_5"/>
<dbReference type="OrthoDB" id="9802265at2"/>
<dbReference type="Proteomes" id="UP000006377">
    <property type="component" value="Chromosome"/>
</dbReference>
<dbReference type="GO" id="GO:0000175">
    <property type="term" value="F:3'-5'-RNA exonuclease activity"/>
    <property type="evidence" value="ECO:0007669"/>
    <property type="project" value="UniProtKB-UniRule"/>
</dbReference>
<dbReference type="GO" id="GO:0000049">
    <property type="term" value="F:tRNA binding"/>
    <property type="evidence" value="ECO:0007669"/>
    <property type="project" value="UniProtKB-UniRule"/>
</dbReference>
<dbReference type="GO" id="GO:0009022">
    <property type="term" value="F:tRNA nucleotidyltransferase activity"/>
    <property type="evidence" value="ECO:0007669"/>
    <property type="project" value="UniProtKB-UniRule"/>
</dbReference>
<dbReference type="GO" id="GO:0016075">
    <property type="term" value="P:rRNA catabolic process"/>
    <property type="evidence" value="ECO:0007669"/>
    <property type="project" value="UniProtKB-UniRule"/>
</dbReference>
<dbReference type="GO" id="GO:0006364">
    <property type="term" value="P:rRNA processing"/>
    <property type="evidence" value="ECO:0007669"/>
    <property type="project" value="UniProtKB-KW"/>
</dbReference>
<dbReference type="GO" id="GO:0008033">
    <property type="term" value="P:tRNA processing"/>
    <property type="evidence" value="ECO:0007669"/>
    <property type="project" value="UniProtKB-UniRule"/>
</dbReference>
<dbReference type="CDD" id="cd11362">
    <property type="entry name" value="RNase_PH_bact"/>
    <property type="match status" value="1"/>
</dbReference>
<dbReference type="FunFam" id="3.30.230.70:FF:000003">
    <property type="entry name" value="Ribonuclease PH"/>
    <property type="match status" value="1"/>
</dbReference>
<dbReference type="Gene3D" id="3.30.230.70">
    <property type="entry name" value="GHMP Kinase, N-terminal domain"/>
    <property type="match status" value="1"/>
</dbReference>
<dbReference type="HAMAP" id="MF_00564">
    <property type="entry name" value="RNase_PH"/>
    <property type="match status" value="1"/>
</dbReference>
<dbReference type="InterPro" id="IPR001247">
    <property type="entry name" value="ExoRNase_PH_dom1"/>
</dbReference>
<dbReference type="InterPro" id="IPR015847">
    <property type="entry name" value="ExoRNase_PH_dom2"/>
</dbReference>
<dbReference type="InterPro" id="IPR036345">
    <property type="entry name" value="ExoRNase_PH_dom2_sf"/>
</dbReference>
<dbReference type="InterPro" id="IPR027408">
    <property type="entry name" value="PNPase/RNase_PH_dom_sf"/>
</dbReference>
<dbReference type="InterPro" id="IPR020568">
    <property type="entry name" value="Ribosomal_Su5_D2-typ_SF"/>
</dbReference>
<dbReference type="InterPro" id="IPR050080">
    <property type="entry name" value="RNase_PH"/>
</dbReference>
<dbReference type="InterPro" id="IPR002381">
    <property type="entry name" value="RNase_PH_bac-type"/>
</dbReference>
<dbReference type="InterPro" id="IPR018336">
    <property type="entry name" value="RNase_PH_CS"/>
</dbReference>
<dbReference type="NCBIfam" id="TIGR01966">
    <property type="entry name" value="RNasePH"/>
    <property type="match status" value="1"/>
</dbReference>
<dbReference type="PANTHER" id="PTHR11953">
    <property type="entry name" value="EXOSOME COMPLEX COMPONENT"/>
    <property type="match status" value="1"/>
</dbReference>
<dbReference type="PANTHER" id="PTHR11953:SF0">
    <property type="entry name" value="EXOSOME COMPLEX COMPONENT RRP41"/>
    <property type="match status" value="1"/>
</dbReference>
<dbReference type="Pfam" id="PF01138">
    <property type="entry name" value="RNase_PH"/>
    <property type="match status" value="1"/>
</dbReference>
<dbReference type="Pfam" id="PF03725">
    <property type="entry name" value="RNase_PH_C"/>
    <property type="match status" value="1"/>
</dbReference>
<dbReference type="SUPFAM" id="SSF55666">
    <property type="entry name" value="Ribonuclease PH domain 2-like"/>
    <property type="match status" value="1"/>
</dbReference>
<dbReference type="SUPFAM" id="SSF54211">
    <property type="entry name" value="Ribosomal protein S5 domain 2-like"/>
    <property type="match status" value="1"/>
</dbReference>
<dbReference type="PROSITE" id="PS01277">
    <property type="entry name" value="RIBONUCLEASE_PH"/>
    <property type="match status" value="1"/>
</dbReference>